<name>PB1F2_I02A4</name>
<gene>
    <name evidence="1" type="primary">PB1</name>
</gene>
<sequence length="90" mass="10893">MEQEQDTPWTRSIEHINTQRRGNGQQTQKLEHPNSIQLMDHYPRITSRADMHKQIVCWKQWLSLKNPTQGSLKTHVLKRWKLFSKQEWTN</sequence>
<comment type="function">
    <text evidence="1">Plays an important role in promoting lung pathology in both primary viral infection and secondary bacterial infection. Promotes alteration of mitochondrial morphology, dissipation of mitochondrial membrane potential, and cell death. Alternatively, inhibits the production of interferon in the infected cell at the level of host mitochondrial antiviral signaling MAVS. Its level of expression differs greatly depending on which cell type is infected, in a manner that is independent of the levels of expression of other viral proteins. Monocytic cells are more affected than epithelial cells. Seems to disable virus-infected monocytes or other host innate immune cells. During early stage of infection, predisposes the mitochondria to permeability transition through interaction with host SLC25A6/ANT3 and VDAC1. These proteins participate in the formation of the permeability transition pore complex (PTPC) responsible of the release of mitochondrial products that triggers apoptosis.</text>
</comment>
<comment type="subunit">
    <text evidence="1">Oligomer. Interacts with human SLC25A6/ANT3 and VDAC1. Interacts with host MAVS.</text>
</comment>
<comment type="subcellular location">
    <subcellularLocation>
        <location evidence="1">Host mitochondrion inner membrane</location>
    </subcellularLocation>
    <subcellularLocation>
        <location evidence="1">Host nucleus</location>
    </subcellularLocation>
    <subcellularLocation>
        <location evidence="1">Host cytoplasm</location>
        <location evidence="1">Host cytosol</location>
    </subcellularLocation>
    <text evidence="1">Inner mitochondrial membrane in most cells types. Otherwise is detected in the nucleus and cytosol.</text>
</comment>
<comment type="miscellaneous">
    <text>Is not encoded in all strains, and seems to be dispensable for replication.</text>
</comment>
<comment type="similarity">
    <text evidence="1">Belongs to the influenza viruses PB1-F2 family.</text>
</comment>
<protein>
    <recommendedName>
        <fullName evidence="1">Protein PB1-F2</fullName>
    </recommendedName>
</protein>
<proteinExistence type="inferred from homology"/>
<evidence type="ECO:0000255" key="1">
    <source>
        <dbReference type="HAMAP-Rule" id="MF_04064"/>
    </source>
</evidence>
<evidence type="ECO:0000256" key="2">
    <source>
        <dbReference type="SAM" id="MobiDB-lite"/>
    </source>
</evidence>
<organism>
    <name type="scientific">Influenza A virus (strain A/Silky Chicken/Hong Kong/YU100/2002 H5N1 genotype X3)</name>
    <dbReference type="NCBI Taxonomy" id="284214"/>
    <lineage>
        <taxon>Viruses</taxon>
        <taxon>Riboviria</taxon>
        <taxon>Orthornavirae</taxon>
        <taxon>Negarnaviricota</taxon>
        <taxon>Polyploviricotina</taxon>
        <taxon>Insthoviricetes</taxon>
        <taxon>Articulavirales</taxon>
        <taxon>Orthomyxoviridae</taxon>
        <taxon>Alphainfluenzavirus</taxon>
        <taxon>Alphainfluenzavirus influenzae</taxon>
        <taxon>Influenza A virus</taxon>
    </lineage>
</organism>
<accession>P0C5V3</accession>
<feature type="chain" id="PRO_0000311644" description="Protein PB1-F2">
    <location>
        <begin position="1"/>
        <end position="90"/>
    </location>
</feature>
<feature type="region of interest" description="Disordered" evidence="2">
    <location>
        <begin position="1"/>
        <end position="30"/>
    </location>
</feature>
<feature type="region of interest" description="Mitochondrial targeting sequence" evidence="1">
    <location>
        <begin position="65"/>
        <end position="87"/>
    </location>
</feature>
<feature type="compositionally biased region" description="Polar residues" evidence="2">
    <location>
        <begin position="1"/>
        <end position="28"/>
    </location>
</feature>
<feature type="site" description="Low pathogenicity" evidence="1">
    <location>
        <position position="66"/>
    </location>
</feature>
<organismHost>
    <name type="scientific">Aves</name>
    <dbReference type="NCBI Taxonomy" id="8782"/>
</organismHost>
<organismHost>
    <name type="scientific">Felis catus</name>
    <name type="common">Cat</name>
    <name type="synonym">Felis silvestris catus</name>
    <dbReference type="NCBI Taxonomy" id="9685"/>
</organismHost>
<organismHost>
    <name type="scientific">Homo sapiens</name>
    <name type="common">Human</name>
    <dbReference type="NCBI Taxonomy" id="9606"/>
</organismHost>
<organismHost>
    <name type="scientific">Panthera pardus</name>
    <name type="common">Leopard</name>
    <name type="synonym">Felis pardus</name>
    <dbReference type="NCBI Taxonomy" id="9691"/>
</organismHost>
<organismHost>
    <name type="scientific">Panthera tigris</name>
    <name type="common">Tiger</name>
    <dbReference type="NCBI Taxonomy" id="9694"/>
</organismHost>
<organismHost>
    <name type="scientific">Sus scrofa</name>
    <name type="common">Pig</name>
    <dbReference type="NCBI Taxonomy" id="9823"/>
</organismHost>
<keyword id="KW-0053">Apoptosis</keyword>
<keyword id="KW-1035">Host cytoplasm</keyword>
<keyword id="KW-1043">Host membrane</keyword>
<keyword id="KW-1045">Host mitochondrion</keyword>
<keyword id="KW-1046">Host mitochondrion inner membrane</keyword>
<keyword id="KW-1048">Host nucleus</keyword>
<keyword id="KW-0945">Host-virus interaction</keyword>
<keyword id="KW-1090">Inhibition of host innate immune response by virus</keyword>
<keyword id="KW-1097">Inhibition of host MAVS by virus</keyword>
<keyword id="KW-1113">Inhibition of host RLR pathway by virus</keyword>
<keyword id="KW-0472">Membrane</keyword>
<keyword id="KW-1119">Modulation of host cell apoptosis by virus</keyword>
<keyword id="KW-0899">Viral immunoevasion</keyword>
<reference key="1">
    <citation type="journal article" date="2004" name="Nature">
        <title>Genesis of a highly pathogenic and potentially pandemic H5N1 influenza virus in eastern Asia.</title>
        <authorList>
            <person name="Li K.S."/>
            <person name="Guan Y."/>
            <person name="Wang J."/>
            <person name="Smith G.J.D."/>
            <person name="Xu K.M."/>
            <person name="Duan L."/>
            <person name="Rahardjo A.P."/>
            <person name="Puthavathana P."/>
            <person name="Buranathai C."/>
            <person name="Nguyen T.D."/>
            <person name="Estoepangestie A.T.S."/>
            <person name="Chaisingh A."/>
            <person name="Auewarakul P."/>
            <person name="Long H.T."/>
            <person name="Hanh N.T.H."/>
            <person name="Webby R.J."/>
            <person name="Poon L.L.M."/>
            <person name="Chen H."/>
            <person name="Shortridge K.F."/>
            <person name="Yuen K.Y."/>
            <person name="Webster R.G."/>
            <person name="Peiris J.S.M."/>
        </authorList>
    </citation>
    <scope>NUCLEOTIDE SEQUENCE [GENOMIC RNA]</scope>
</reference>
<dbReference type="EMBL" id="AY651679">
    <property type="status" value="NOT_ANNOTATED_CDS"/>
    <property type="molecule type" value="Genomic_RNA"/>
</dbReference>
<dbReference type="SMR" id="P0C5V3"/>
<dbReference type="GO" id="GO:0044164">
    <property type="term" value="C:host cell cytosol"/>
    <property type="evidence" value="ECO:0007669"/>
    <property type="project" value="UniProtKB-SubCell"/>
</dbReference>
<dbReference type="GO" id="GO:0044192">
    <property type="term" value="C:host cell mitochondrial inner membrane"/>
    <property type="evidence" value="ECO:0007669"/>
    <property type="project" value="UniProtKB-SubCell"/>
</dbReference>
<dbReference type="GO" id="GO:0042025">
    <property type="term" value="C:host cell nucleus"/>
    <property type="evidence" value="ECO:0007669"/>
    <property type="project" value="UniProtKB-SubCell"/>
</dbReference>
<dbReference type="GO" id="GO:0016020">
    <property type="term" value="C:membrane"/>
    <property type="evidence" value="ECO:0007669"/>
    <property type="project" value="UniProtKB-UniRule"/>
</dbReference>
<dbReference type="GO" id="GO:0052150">
    <property type="term" value="P:symbiont-mediated perturbation of host apoptosis"/>
    <property type="evidence" value="ECO:0007669"/>
    <property type="project" value="UniProtKB-KW"/>
</dbReference>
<dbReference type="GO" id="GO:0039545">
    <property type="term" value="P:symbiont-mediated suppression of host cytoplasmic pattern recognition receptor signaling pathway via inhibition of MAVS activity"/>
    <property type="evidence" value="ECO:0007669"/>
    <property type="project" value="UniProtKB-KW"/>
</dbReference>
<dbReference type="HAMAP" id="MF_04064">
    <property type="entry name" value="INFV_PB1F2"/>
    <property type="match status" value="1"/>
</dbReference>
<dbReference type="InterPro" id="IPR021045">
    <property type="entry name" value="Flu_proapoptotic_PB1-F2"/>
</dbReference>
<dbReference type="Pfam" id="PF11986">
    <property type="entry name" value="PB1-F2"/>
    <property type="match status" value="1"/>
</dbReference>